<accession>Q54T07</accession>
<protein>
    <recommendedName>
        <fullName>Putative uncharacterized protein DDB_G0282065</fullName>
    </recommendedName>
</protein>
<feature type="signal peptide" evidence="1">
    <location>
        <begin position="1"/>
        <end position="23"/>
    </location>
</feature>
<feature type="chain" id="PRO_0000351242" description="Putative uncharacterized protein DDB_G0282065">
    <location>
        <begin position="24"/>
        <end position="109"/>
    </location>
</feature>
<feature type="region of interest" description="Disordered" evidence="2">
    <location>
        <begin position="45"/>
        <end position="109"/>
    </location>
</feature>
<feature type="compositionally biased region" description="Low complexity" evidence="2">
    <location>
        <begin position="54"/>
        <end position="72"/>
    </location>
</feature>
<feature type="compositionally biased region" description="Basic and acidic residues" evidence="2">
    <location>
        <begin position="94"/>
        <end position="103"/>
    </location>
</feature>
<feature type="glycosylation site" description="N-linked (GlcNAc...) asparagine" evidence="1">
    <location>
        <position position="27"/>
    </location>
</feature>
<sequence>MKNYNFILISLFIIFFIILNISSNNNNFTNAEEMTGINDIINRRYQEYMENRTPNEQQQQQQQQQNNNNPPQHIDPLVGNPCNHDQIMQGRISKLKEKLKKDQQNQQQN</sequence>
<evidence type="ECO:0000255" key="1"/>
<evidence type="ECO:0000256" key="2">
    <source>
        <dbReference type="SAM" id="MobiDB-lite"/>
    </source>
</evidence>
<evidence type="ECO:0000305" key="3"/>
<reference key="1">
    <citation type="journal article" date="2005" name="Nature">
        <title>The genome of the social amoeba Dictyostelium discoideum.</title>
        <authorList>
            <person name="Eichinger L."/>
            <person name="Pachebat J.A."/>
            <person name="Gloeckner G."/>
            <person name="Rajandream M.A."/>
            <person name="Sucgang R."/>
            <person name="Berriman M."/>
            <person name="Song J."/>
            <person name="Olsen R."/>
            <person name="Szafranski K."/>
            <person name="Xu Q."/>
            <person name="Tunggal B."/>
            <person name="Kummerfeld S."/>
            <person name="Madera M."/>
            <person name="Konfortov B.A."/>
            <person name="Rivero F."/>
            <person name="Bankier A.T."/>
            <person name="Lehmann R."/>
            <person name="Hamlin N."/>
            <person name="Davies R."/>
            <person name="Gaudet P."/>
            <person name="Fey P."/>
            <person name="Pilcher K."/>
            <person name="Chen G."/>
            <person name="Saunders D."/>
            <person name="Sodergren E.J."/>
            <person name="Davis P."/>
            <person name="Kerhornou A."/>
            <person name="Nie X."/>
            <person name="Hall N."/>
            <person name="Anjard C."/>
            <person name="Hemphill L."/>
            <person name="Bason N."/>
            <person name="Farbrother P."/>
            <person name="Desany B."/>
            <person name="Just E."/>
            <person name="Morio T."/>
            <person name="Rost R."/>
            <person name="Churcher C.M."/>
            <person name="Cooper J."/>
            <person name="Haydock S."/>
            <person name="van Driessche N."/>
            <person name="Cronin A."/>
            <person name="Goodhead I."/>
            <person name="Muzny D.M."/>
            <person name="Mourier T."/>
            <person name="Pain A."/>
            <person name="Lu M."/>
            <person name="Harper D."/>
            <person name="Lindsay R."/>
            <person name="Hauser H."/>
            <person name="James K.D."/>
            <person name="Quiles M."/>
            <person name="Madan Babu M."/>
            <person name="Saito T."/>
            <person name="Buchrieser C."/>
            <person name="Wardroper A."/>
            <person name="Felder M."/>
            <person name="Thangavelu M."/>
            <person name="Johnson D."/>
            <person name="Knights A."/>
            <person name="Loulseged H."/>
            <person name="Mungall K.L."/>
            <person name="Oliver K."/>
            <person name="Price C."/>
            <person name="Quail M.A."/>
            <person name="Urushihara H."/>
            <person name="Hernandez J."/>
            <person name="Rabbinowitsch E."/>
            <person name="Steffen D."/>
            <person name="Sanders M."/>
            <person name="Ma J."/>
            <person name="Kohara Y."/>
            <person name="Sharp S."/>
            <person name="Simmonds M.N."/>
            <person name="Spiegler S."/>
            <person name="Tivey A."/>
            <person name="Sugano S."/>
            <person name="White B."/>
            <person name="Walker D."/>
            <person name="Woodward J.R."/>
            <person name="Winckler T."/>
            <person name="Tanaka Y."/>
            <person name="Shaulsky G."/>
            <person name="Schleicher M."/>
            <person name="Weinstock G.M."/>
            <person name="Rosenthal A."/>
            <person name="Cox E.C."/>
            <person name="Chisholm R.L."/>
            <person name="Gibbs R.A."/>
            <person name="Loomis W.F."/>
            <person name="Platzer M."/>
            <person name="Kay R.R."/>
            <person name="Williams J.G."/>
            <person name="Dear P.H."/>
            <person name="Noegel A.A."/>
            <person name="Barrell B.G."/>
            <person name="Kuspa A."/>
        </authorList>
    </citation>
    <scope>NUCLEOTIDE SEQUENCE [LARGE SCALE GENOMIC DNA]</scope>
    <source>
        <strain>AX4</strain>
    </source>
</reference>
<comment type="subcellular location">
    <subcellularLocation>
        <location evidence="3">Secreted</location>
    </subcellularLocation>
</comment>
<gene>
    <name type="ORF">DDB_G0282065</name>
</gene>
<proteinExistence type="inferred from homology"/>
<keyword id="KW-0325">Glycoprotein</keyword>
<keyword id="KW-1185">Reference proteome</keyword>
<keyword id="KW-0964">Secreted</keyword>
<keyword id="KW-0732">Signal</keyword>
<name>Y5128_DICDI</name>
<dbReference type="EMBL" id="AAFI02000044">
    <property type="protein sequence ID" value="EAL66454.1"/>
    <property type="molecule type" value="Genomic_DNA"/>
</dbReference>
<dbReference type="RefSeq" id="XP_640444.1">
    <property type="nucleotide sequence ID" value="XM_635352.1"/>
</dbReference>
<dbReference type="FunCoup" id="Q54T07">
    <property type="interactions" value="877"/>
</dbReference>
<dbReference type="GlyGen" id="Q54T07">
    <property type="glycosylation" value="1 site"/>
</dbReference>
<dbReference type="PaxDb" id="44689-DDB0205128"/>
<dbReference type="EnsemblProtists" id="EAL66454">
    <property type="protein sequence ID" value="EAL66454"/>
    <property type="gene ID" value="DDB_G0282065"/>
</dbReference>
<dbReference type="GeneID" id="8623403"/>
<dbReference type="KEGG" id="ddi:DDB_G0282065"/>
<dbReference type="dictyBase" id="DDB_G0282065"/>
<dbReference type="VEuPathDB" id="AmoebaDB:DDB_G0282065"/>
<dbReference type="HOGENOM" id="CLU_2188920_0_0_1"/>
<dbReference type="InParanoid" id="Q54T07"/>
<dbReference type="OMA" id="EMTGIND"/>
<dbReference type="PRO" id="PR:Q54T07"/>
<dbReference type="Proteomes" id="UP000002195">
    <property type="component" value="Chromosome 3"/>
</dbReference>
<dbReference type="GO" id="GO:0005576">
    <property type="term" value="C:extracellular region"/>
    <property type="evidence" value="ECO:0007669"/>
    <property type="project" value="UniProtKB-SubCell"/>
</dbReference>
<organism>
    <name type="scientific">Dictyostelium discoideum</name>
    <name type="common">Social amoeba</name>
    <dbReference type="NCBI Taxonomy" id="44689"/>
    <lineage>
        <taxon>Eukaryota</taxon>
        <taxon>Amoebozoa</taxon>
        <taxon>Evosea</taxon>
        <taxon>Eumycetozoa</taxon>
        <taxon>Dictyostelia</taxon>
        <taxon>Dictyosteliales</taxon>
        <taxon>Dictyosteliaceae</taxon>
        <taxon>Dictyostelium</taxon>
    </lineage>
</organism>